<organism>
    <name type="scientific">Mus musculus</name>
    <name type="common">Mouse</name>
    <dbReference type="NCBI Taxonomy" id="10090"/>
    <lineage>
        <taxon>Eukaryota</taxon>
        <taxon>Metazoa</taxon>
        <taxon>Chordata</taxon>
        <taxon>Craniata</taxon>
        <taxon>Vertebrata</taxon>
        <taxon>Euteleostomi</taxon>
        <taxon>Mammalia</taxon>
        <taxon>Eutheria</taxon>
        <taxon>Euarchontoglires</taxon>
        <taxon>Glires</taxon>
        <taxon>Rodentia</taxon>
        <taxon>Myomorpha</taxon>
        <taxon>Muroidea</taxon>
        <taxon>Muridae</taxon>
        <taxon>Murinae</taxon>
        <taxon>Mus</taxon>
        <taxon>Mus</taxon>
    </lineage>
</organism>
<dbReference type="EMBL" id="AF291483">
    <property type="protein sequence ID" value="AAG42077.1"/>
    <property type="molecule type" value="Genomic_DNA"/>
</dbReference>
<dbReference type="EMBL" id="AB062895">
    <property type="protein sequence ID" value="BAB79213.1"/>
    <property type="molecule type" value="Genomic_DNA"/>
</dbReference>
<dbReference type="EMBL" id="BC111822">
    <property type="protein sequence ID" value="AAI11823.1"/>
    <property type="molecule type" value="mRNA"/>
</dbReference>
<dbReference type="CCDS" id="CCDS20349.1"/>
<dbReference type="RefSeq" id="NP_444449.2">
    <property type="nucleotide sequence ID" value="NM_053219.2"/>
</dbReference>
<dbReference type="SMR" id="Q9EQ51"/>
<dbReference type="IntAct" id="Q9EQ51">
    <property type="interactions" value="1"/>
</dbReference>
<dbReference type="STRING" id="10090.ENSMUSP00000153727"/>
<dbReference type="GlyCosmos" id="Q9EQ51">
    <property type="glycosylation" value="1 site, No reported glycans"/>
</dbReference>
<dbReference type="GlyGen" id="Q9EQ51">
    <property type="glycosylation" value="1 site"/>
</dbReference>
<dbReference type="PaxDb" id="10090-ENSMUSP00000074422"/>
<dbReference type="DNASU" id="113846"/>
<dbReference type="GeneID" id="113846"/>
<dbReference type="KEGG" id="mmu:113846"/>
<dbReference type="UCSC" id="uc009cwr.1">
    <property type="organism name" value="mouse"/>
</dbReference>
<dbReference type="AGR" id="MGI:2148509"/>
<dbReference type="CTD" id="113846"/>
<dbReference type="MGI" id="MGI:2148509">
    <property type="gene designation" value="Vmn1r47"/>
</dbReference>
<dbReference type="eggNOG" id="ENOG502SNRJ">
    <property type="taxonomic scope" value="Eukaryota"/>
</dbReference>
<dbReference type="InParanoid" id="Q9EQ51"/>
<dbReference type="OrthoDB" id="9620038at2759"/>
<dbReference type="PhylomeDB" id="Q9EQ51"/>
<dbReference type="BioGRID-ORCS" id="113846">
    <property type="hits" value="2 hits in 67 CRISPR screens"/>
</dbReference>
<dbReference type="PRO" id="PR:Q9EQ51"/>
<dbReference type="Proteomes" id="UP000000589">
    <property type="component" value="Unplaced"/>
</dbReference>
<dbReference type="RNAct" id="Q9EQ51">
    <property type="molecule type" value="protein"/>
</dbReference>
<dbReference type="GO" id="GO:0005886">
    <property type="term" value="C:plasma membrane"/>
    <property type="evidence" value="ECO:0007669"/>
    <property type="project" value="UniProtKB-SubCell"/>
</dbReference>
<dbReference type="GO" id="GO:0016503">
    <property type="term" value="F:pheromone receptor activity"/>
    <property type="evidence" value="ECO:0007669"/>
    <property type="project" value="InterPro"/>
</dbReference>
<dbReference type="GO" id="GO:0019236">
    <property type="term" value="P:response to pheromone"/>
    <property type="evidence" value="ECO:0007669"/>
    <property type="project" value="UniProtKB-KW"/>
</dbReference>
<dbReference type="GO" id="GO:0007606">
    <property type="term" value="P:sensory perception of chemical stimulus"/>
    <property type="evidence" value="ECO:0000304"/>
    <property type="project" value="MGI"/>
</dbReference>
<dbReference type="CDD" id="cd13949">
    <property type="entry name" value="7tm_V1R_pheromone"/>
    <property type="match status" value="1"/>
</dbReference>
<dbReference type="FunFam" id="1.20.1070.10:FF:000051">
    <property type="entry name" value="Vomeronasal type-1 receptor"/>
    <property type="match status" value="1"/>
</dbReference>
<dbReference type="Gene3D" id="1.20.1070.10">
    <property type="entry name" value="Rhodopsin 7-helix transmembrane proteins"/>
    <property type="match status" value="1"/>
</dbReference>
<dbReference type="InterPro" id="IPR017452">
    <property type="entry name" value="GPCR_Rhodpsn_7TM"/>
</dbReference>
<dbReference type="InterPro" id="IPR004072">
    <property type="entry name" value="Vmron_rcpt_1"/>
</dbReference>
<dbReference type="PANTHER" id="PTHR24062">
    <property type="entry name" value="VOMERONASAL TYPE-1 RECEPTOR"/>
    <property type="match status" value="1"/>
</dbReference>
<dbReference type="Pfam" id="PF03402">
    <property type="entry name" value="V1R"/>
    <property type="match status" value="1"/>
</dbReference>
<dbReference type="PRINTS" id="PR01534">
    <property type="entry name" value="VOMERONASL1R"/>
</dbReference>
<dbReference type="SUPFAM" id="SSF81321">
    <property type="entry name" value="Family A G protein-coupled receptor-like"/>
    <property type="match status" value="1"/>
</dbReference>
<dbReference type="PROSITE" id="PS50262">
    <property type="entry name" value="G_PROTEIN_RECEP_F1_2"/>
    <property type="match status" value="1"/>
</dbReference>
<name>V1R47_MOUSE</name>
<proteinExistence type="evidence at transcript level"/>
<gene>
    <name type="primary">Vmn1r47</name>
    <name type="synonym">V1ra4</name>
    <name evidence="7" type="synonym">V1ra7</name>
</gene>
<accession>Q9EQ51</accession>
<accession>Q2M2P9</accession>
<accession>Q8VIC8</accession>
<sequence>MNENSRLHTHSNIRNTFFSEIGIGISGNSFLLLFHIIKFFRGHRPRLTDLPIGLLSLIHLLMLLVAAVIATDIFISWRGWNDIICKFLVYLYRSLRGLSLCTTSMLSVLQAIILSPRSYCLAKFKRKSSHNISCAIIFLSVLYMSISSHLFISITATLNLTMNNFLYVSQSCSLLPLSYLMQSMYSTLLVLREVFLIGLMVLSTSYMVALLCMHRKQAQNLQGTSLSLKTAPEQRATQTILMLMTFFVLMSIFDSIVSSSRAMFLDDSTCYSIYIFVMHIYATVSPFVFMSTEKHLVNFFRSMCEWIINM</sequence>
<comment type="function">
    <text evidence="3">Putative pheromone receptor implicated in the regulation of social and reproductive behavior.</text>
</comment>
<comment type="subcellular location">
    <subcellularLocation>
        <location evidence="4">Cell membrane</location>
        <topology evidence="1">Multi-pass membrane protein</topology>
    </subcellularLocation>
</comment>
<comment type="disruption phenotype">
    <text evidence="3">Mice lacking all but one V1ra and V1rb gene (12% of the V1r repertoire) show a lack of chemosensory response to a subset of known pheromonal ligands and changes in maternal aggression as well as male reproductive behavior.</text>
</comment>
<comment type="similarity">
    <text evidence="2">Belongs to the G-protein coupled receptor 1 family.</text>
</comment>
<protein>
    <recommendedName>
        <fullName>Vomeronasal type-1 receptor 47</fullName>
    </recommendedName>
    <alternativeName>
        <fullName>Vomeronasal type-1 receptor A4</fullName>
    </alternativeName>
    <alternativeName>
        <fullName>Vomeronasal type-1 receptor A7</fullName>
    </alternativeName>
</protein>
<feature type="chain" id="PRO_0000239959" description="Vomeronasal type-1 receptor 47">
    <location>
        <begin position="1"/>
        <end position="310"/>
    </location>
</feature>
<feature type="topological domain" description="Extracellular" evidence="1">
    <location>
        <begin position="1"/>
        <end position="16"/>
    </location>
</feature>
<feature type="transmembrane region" description="Helical; Name=1" evidence="1">
    <location>
        <begin position="17"/>
        <end position="37"/>
    </location>
</feature>
<feature type="topological domain" description="Cytoplasmic" evidence="1">
    <location>
        <begin position="38"/>
        <end position="49"/>
    </location>
</feature>
<feature type="transmembrane region" description="Helical; Name=2" evidence="1">
    <location>
        <begin position="50"/>
        <end position="70"/>
    </location>
</feature>
<feature type="topological domain" description="Extracellular" evidence="1">
    <location>
        <begin position="71"/>
        <end position="91"/>
    </location>
</feature>
<feature type="transmembrane region" description="Helical; Name=3" evidence="1">
    <location>
        <begin position="92"/>
        <end position="114"/>
    </location>
</feature>
<feature type="topological domain" description="Cytoplasmic" evidence="1">
    <location>
        <begin position="115"/>
        <end position="131"/>
    </location>
</feature>
<feature type="transmembrane region" description="Helical; Name=4" evidence="1">
    <location>
        <begin position="132"/>
        <end position="152"/>
    </location>
</feature>
<feature type="topological domain" description="Extracellular" evidence="1">
    <location>
        <begin position="153"/>
        <end position="193"/>
    </location>
</feature>
<feature type="transmembrane region" description="Helical; Name=5" evidence="1">
    <location>
        <begin position="194"/>
        <end position="214"/>
    </location>
</feature>
<feature type="topological domain" description="Cytoplasmic" evidence="1">
    <location>
        <begin position="215"/>
        <end position="238"/>
    </location>
</feature>
<feature type="transmembrane region" description="Helical; Name=6" evidence="1">
    <location>
        <begin position="239"/>
        <end position="259"/>
    </location>
</feature>
<feature type="topological domain" description="Extracellular" evidence="1">
    <location>
        <begin position="260"/>
        <end position="269"/>
    </location>
</feature>
<feature type="transmembrane region" description="Helical; Name=7" evidence="1">
    <location>
        <begin position="270"/>
        <end position="290"/>
    </location>
</feature>
<feature type="topological domain" description="Cytoplasmic" evidence="1">
    <location>
        <begin position="291"/>
        <end position="310"/>
    </location>
</feature>
<feature type="glycosylation site" description="N-linked (GlcNAc...) asparagine" evidence="1">
    <location>
        <position position="159"/>
    </location>
</feature>
<feature type="disulfide bond" evidence="2">
    <location>
        <begin position="85"/>
        <end position="172"/>
    </location>
</feature>
<feature type="sequence conflict" description="In Ref. 2; BAB79213." evidence="4" ref="2">
    <original>TAP</original>
    <variation>ASA</variation>
    <location>
        <begin position="230"/>
        <end position="232"/>
    </location>
</feature>
<keyword id="KW-1003">Cell membrane</keyword>
<keyword id="KW-1015">Disulfide bond</keyword>
<keyword id="KW-0297">G-protein coupled receptor</keyword>
<keyword id="KW-0325">Glycoprotein</keyword>
<keyword id="KW-0472">Membrane</keyword>
<keyword id="KW-0589">Pheromone response</keyword>
<keyword id="KW-0675">Receptor</keyword>
<keyword id="KW-1185">Reference proteome</keyword>
<keyword id="KW-0807">Transducer</keyword>
<keyword id="KW-0812">Transmembrane</keyword>
<keyword id="KW-1133">Transmembrane helix</keyword>
<evidence type="ECO:0000255" key="1"/>
<evidence type="ECO:0000255" key="2">
    <source>
        <dbReference type="PROSITE-ProRule" id="PRU00521"/>
    </source>
</evidence>
<evidence type="ECO:0000269" key="3">
    <source>
    </source>
</evidence>
<evidence type="ECO:0000305" key="4"/>
<evidence type="ECO:0000312" key="5">
    <source>
        <dbReference type="EMBL" id="AAG42077.1"/>
    </source>
</evidence>
<evidence type="ECO:0000312" key="6">
    <source>
        <dbReference type="EMBL" id="AAI11823.1"/>
    </source>
</evidence>
<evidence type="ECO:0000312" key="7">
    <source>
        <dbReference type="EMBL" id="BAB79213.1"/>
    </source>
</evidence>
<reference evidence="5" key="1">
    <citation type="journal article" date="2000" name="Genome Res.">
        <title>Sequence diversity and genomic organization of vomeronasal receptor genes in the mouse.</title>
        <authorList>
            <person name="Del Punta K."/>
            <person name="Rothman A."/>
            <person name="Rodriguez I."/>
            <person name="Mombaerts P."/>
        </authorList>
    </citation>
    <scope>NUCLEOTIDE SEQUENCE [GENOMIC DNA]</scope>
    <source>
        <strain evidence="5">129/SvJ</strain>
    </source>
</reference>
<reference evidence="7" key="2">
    <citation type="submission" date="2001-06" db="EMBL/GenBank/DDBJ databases">
        <title>Vomeronasal receptor gene diversity in the mammalian genome.</title>
        <authorList>
            <person name="Sam M."/>
            <person name="Matsunami H."/>
            <person name="Buck L."/>
        </authorList>
    </citation>
    <scope>NUCLEOTIDE SEQUENCE [GENOMIC DNA]</scope>
</reference>
<reference evidence="6" key="3">
    <citation type="journal article" date="2004" name="Genome Res.">
        <title>The status, quality, and expansion of the NIH full-length cDNA project: the Mammalian Gene Collection (MGC).</title>
        <authorList>
            <consortium name="The MGC Project Team"/>
        </authorList>
    </citation>
    <scope>NUCLEOTIDE SEQUENCE [LARGE SCALE MRNA] OF 2-310</scope>
</reference>
<reference evidence="4" key="4">
    <citation type="journal article" date="2002" name="Nature">
        <title>Deficient pheromone responses in mice lacking a cluster of vomeronasal receptor genes.</title>
        <authorList>
            <person name="Del Punta K."/>
            <person name="Leinders-Zufall T."/>
            <person name="Rodriguez I."/>
            <person name="Jukam D."/>
            <person name="Wysocki C.J."/>
            <person name="Ogawa S."/>
            <person name="Zufall F."/>
            <person name="Mombaerts P."/>
        </authorList>
    </citation>
    <scope>PUTATIVE FUNCTION</scope>
    <scope>DISRUPTION PHENOTYPE</scope>
</reference>